<proteinExistence type="inferred from homology"/>
<gene>
    <name evidence="1" type="primary">argB</name>
    <name type="ordered locus">VFMJ11_2417</name>
</gene>
<comment type="function">
    <text evidence="1">Catalyzes the ATP-dependent phosphorylation of N-acetyl-L-glutamate.</text>
</comment>
<comment type="catalytic activity">
    <reaction evidence="1">
        <text>N-acetyl-L-glutamate + ATP = N-acetyl-L-glutamyl 5-phosphate + ADP</text>
        <dbReference type="Rhea" id="RHEA:14629"/>
        <dbReference type="ChEBI" id="CHEBI:30616"/>
        <dbReference type="ChEBI" id="CHEBI:44337"/>
        <dbReference type="ChEBI" id="CHEBI:57936"/>
        <dbReference type="ChEBI" id="CHEBI:456216"/>
        <dbReference type="EC" id="2.7.2.8"/>
    </reaction>
</comment>
<comment type="pathway">
    <text evidence="1">Amino-acid biosynthesis; L-arginine biosynthesis; N(2)-acetyl-L-ornithine from L-glutamate: step 2/4.</text>
</comment>
<comment type="subcellular location">
    <subcellularLocation>
        <location evidence="1">Cytoplasm</location>
    </subcellularLocation>
</comment>
<comment type="similarity">
    <text evidence="1">Belongs to the acetylglutamate kinase family. ArgB subfamily.</text>
</comment>
<protein>
    <recommendedName>
        <fullName evidence="1">Acetylglutamate kinase</fullName>
        <ecNumber evidence="1">2.7.2.8</ecNumber>
    </recommendedName>
    <alternativeName>
        <fullName evidence="1">N-acetyl-L-glutamate 5-phosphotransferase</fullName>
    </alternativeName>
    <alternativeName>
        <fullName evidence="1">NAG kinase</fullName>
        <shortName evidence="1">NAGK</shortName>
    </alternativeName>
</protein>
<sequence length="260" mass="27390">MNQRPLVIKLGGAVLSSIDTLTLLFKTISNYQQQAKRSLIIVHGGGYLVDELMAKLQLETIKKEGLRVTPKDQIGYITGALAGTANKMLQGQAMKNNVKAIGLSLADGGLCQITQLNPELGNVGLATAGDAKVLEAILATQVTPIISSIGITNDGELMNVNADQAAVAVATALDADLVLLSDVPGVLDAEKQLIKSLDSAQAEMLIHQAVITDGMIVKVRAALDAAQELGRAIEVASWRSPEKLAELFIGNSIGTQFQPQ</sequence>
<evidence type="ECO:0000255" key="1">
    <source>
        <dbReference type="HAMAP-Rule" id="MF_00082"/>
    </source>
</evidence>
<accession>B5FBP5</accession>
<name>ARGB_ALIFM</name>
<dbReference type="EC" id="2.7.2.8" evidence="1"/>
<dbReference type="EMBL" id="CP001139">
    <property type="protein sequence ID" value="ACH65556.1"/>
    <property type="molecule type" value="Genomic_DNA"/>
</dbReference>
<dbReference type="RefSeq" id="WP_011262712.1">
    <property type="nucleotide sequence ID" value="NC_011184.1"/>
</dbReference>
<dbReference type="SMR" id="B5FBP5"/>
<dbReference type="GeneID" id="54165020"/>
<dbReference type="KEGG" id="vfm:VFMJ11_2417"/>
<dbReference type="HOGENOM" id="CLU_053680_1_1_6"/>
<dbReference type="UniPathway" id="UPA00068">
    <property type="reaction ID" value="UER00107"/>
</dbReference>
<dbReference type="Proteomes" id="UP000001857">
    <property type="component" value="Chromosome I"/>
</dbReference>
<dbReference type="GO" id="GO:0005737">
    <property type="term" value="C:cytoplasm"/>
    <property type="evidence" value="ECO:0007669"/>
    <property type="project" value="UniProtKB-SubCell"/>
</dbReference>
<dbReference type="GO" id="GO:0003991">
    <property type="term" value="F:acetylglutamate kinase activity"/>
    <property type="evidence" value="ECO:0007669"/>
    <property type="project" value="UniProtKB-UniRule"/>
</dbReference>
<dbReference type="GO" id="GO:0005524">
    <property type="term" value="F:ATP binding"/>
    <property type="evidence" value="ECO:0007669"/>
    <property type="project" value="UniProtKB-UniRule"/>
</dbReference>
<dbReference type="GO" id="GO:0042450">
    <property type="term" value="P:arginine biosynthetic process via ornithine"/>
    <property type="evidence" value="ECO:0007669"/>
    <property type="project" value="UniProtKB-UniRule"/>
</dbReference>
<dbReference type="GO" id="GO:0006526">
    <property type="term" value="P:L-arginine biosynthetic process"/>
    <property type="evidence" value="ECO:0007669"/>
    <property type="project" value="UniProtKB-UniPathway"/>
</dbReference>
<dbReference type="Gene3D" id="3.40.1160.10">
    <property type="entry name" value="Acetylglutamate kinase-like"/>
    <property type="match status" value="1"/>
</dbReference>
<dbReference type="HAMAP" id="MF_00082">
    <property type="entry name" value="ArgB"/>
    <property type="match status" value="1"/>
</dbReference>
<dbReference type="InterPro" id="IPR036393">
    <property type="entry name" value="AceGlu_kinase-like_sf"/>
</dbReference>
<dbReference type="InterPro" id="IPR004662">
    <property type="entry name" value="AcgluKinase_fam"/>
</dbReference>
<dbReference type="InterPro" id="IPR037528">
    <property type="entry name" value="ArgB"/>
</dbReference>
<dbReference type="InterPro" id="IPR001048">
    <property type="entry name" value="Asp/Glu/Uridylate_kinase"/>
</dbReference>
<dbReference type="NCBIfam" id="TIGR00761">
    <property type="entry name" value="argB"/>
    <property type="match status" value="1"/>
</dbReference>
<dbReference type="PANTHER" id="PTHR23342">
    <property type="entry name" value="N-ACETYLGLUTAMATE SYNTHASE"/>
    <property type="match status" value="1"/>
</dbReference>
<dbReference type="PANTHER" id="PTHR23342:SF0">
    <property type="entry name" value="N-ACETYLGLUTAMATE SYNTHASE, MITOCHONDRIAL"/>
    <property type="match status" value="1"/>
</dbReference>
<dbReference type="Pfam" id="PF00696">
    <property type="entry name" value="AA_kinase"/>
    <property type="match status" value="1"/>
</dbReference>
<dbReference type="PIRSF" id="PIRSF000728">
    <property type="entry name" value="NAGK"/>
    <property type="match status" value="1"/>
</dbReference>
<dbReference type="SUPFAM" id="SSF53633">
    <property type="entry name" value="Carbamate kinase-like"/>
    <property type="match status" value="1"/>
</dbReference>
<reference key="1">
    <citation type="submission" date="2008-08" db="EMBL/GenBank/DDBJ databases">
        <title>Complete sequence of Vibrio fischeri strain MJ11.</title>
        <authorList>
            <person name="Mandel M.J."/>
            <person name="Stabb E.V."/>
            <person name="Ruby E.G."/>
            <person name="Ferriera S."/>
            <person name="Johnson J."/>
            <person name="Kravitz S."/>
            <person name="Beeson K."/>
            <person name="Sutton G."/>
            <person name="Rogers Y.-H."/>
            <person name="Friedman R."/>
            <person name="Frazier M."/>
            <person name="Venter J.C."/>
        </authorList>
    </citation>
    <scope>NUCLEOTIDE SEQUENCE [LARGE SCALE GENOMIC DNA]</scope>
    <source>
        <strain>MJ11</strain>
    </source>
</reference>
<keyword id="KW-0028">Amino-acid biosynthesis</keyword>
<keyword id="KW-0055">Arginine biosynthesis</keyword>
<keyword id="KW-0067">ATP-binding</keyword>
<keyword id="KW-0963">Cytoplasm</keyword>
<keyword id="KW-0418">Kinase</keyword>
<keyword id="KW-0547">Nucleotide-binding</keyword>
<keyword id="KW-0808">Transferase</keyword>
<feature type="chain" id="PRO_1000092893" description="Acetylglutamate kinase">
    <location>
        <begin position="1"/>
        <end position="260"/>
    </location>
</feature>
<feature type="binding site" evidence="1">
    <location>
        <begin position="45"/>
        <end position="46"/>
    </location>
    <ligand>
        <name>substrate</name>
    </ligand>
</feature>
<feature type="binding site" evidence="1">
    <location>
        <position position="67"/>
    </location>
    <ligand>
        <name>substrate</name>
    </ligand>
</feature>
<feature type="binding site" evidence="1">
    <location>
        <position position="159"/>
    </location>
    <ligand>
        <name>substrate</name>
    </ligand>
</feature>
<feature type="site" description="Transition state stabilizer" evidence="1">
    <location>
        <position position="9"/>
    </location>
</feature>
<feature type="site" description="Transition state stabilizer" evidence="1">
    <location>
        <position position="218"/>
    </location>
</feature>
<organism>
    <name type="scientific">Aliivibrio fischeri (strain MJ11)</name>
    <name type="common">Vibrio fischeri</name>
    <dbReference type="NCBI Taxonomy" id="388396"/>
    <lineage>
        <taxon>Bacteria</taxon>
        <taxon>Pseudomonadati</taxon>
        <taxon>Pseudomonadota</taxon>
        <taxon>Gammaproteobacteria</taxon>
        <taxon>Vibrionales</taxon>
        <taxon>Vibrionaceae</taxon>
        <taxon>Aliivibrio</taxon>
    </lineage>
</organism>